<proteinExistence type="inferred from homology"/>
<comment type="subunit">
    <text evidence="1">Part of the 30S ribosomal subunit.</text>
</comment>
<comment type="subcellular location">
    <subcellularLocation>
        <location>Plastid</location>
        <location>Chloroplast</location>
    </subcellularLocation>
</comment>
<comment type="similarity">
    <text evidence="2">Belongs to the universal ribosomal protein uS15 family.</text>
</comment>
<evidence type="ECO:0000250" key="1"/>
<evidence type="ECO:0000305" key="2"/>
<name>RR15_LOTJA</name>
<accession>Q9BBN7</accession>
<keyword id="KW-0150">Chloroplast</keyword>
<keyword id="KW-0934">Plastid</keyword>
<keyword id="KW-0687">Ribonucleoprotein</keyword>
<keyword id="KW-0689">Ribosomal protein</keyword>
<organism>
    <name type="scientific">Lotus japonicus</name>
    <name type="common">Lotus corniculatus var. japonicus</name>
    <dbReference type="NCBI Taxonomy" id="34305"/>
    <lineage>
        <taxon>Eukaryota</taxon>
        <taxon>Viridiplantae</taxon>
        <taxon>Streptophyta</taxon>
        <taxon>Embryophyta</taxon>
        <taxon>Tracheophyta</taxon>
        <taxon>Spermatophyta</taxon>
        <taxon>Magnoliopsida</taxon>
        <taxon>eudicotyledons</taxon>
        <taxon>Gunneridae</taxon>
        <taxon>Pentapetalae</taxon>
        <taxon>rosids</taxon>
        <taxon>fabids</taxon>
        <taxon>Fabales</taxon>
        <taxon>Fabaceae</taxon>
        <taxon>Papilionoideae</taxon>
        <taxon>50 kb inversion clade</taxon>
        <taxon>NPAAA clade</taxon>
        <taxon>Hologalegina</taxon>
        <taxon>robinioid clade</taxon>
        <taxon>Loteae</taxon>
        <taxon>Lotus</taxon>
    </lineage>
</organism>
<gene>
    <name type="primary">rps15</name>
</gene>
<sequence>MVKKSFIPVISQEKKEENPGSVEFQVFNFTNKIRRLTSHFELHRKDYLSQRGLRKILGKRQRLLSYLSKKNKIRYKKLINLLDIRESKIR</sequence>
<feature type="chain" id="PRO_0000115634" description="Small ribosomal subunit protein uS15c">
    <location>
        <begin position="1"/>
        <end position="90"/>
    </location>
</feature>
<protein>
    <recommendedName>
        <fullName evidence="2">Small ribosomal subunit protein uS15c</fullName>
    </recommendedName>
    <alternativeName>
        <fullName>30S ribosomal protein S15, chloroplastic</fullName>
    </alternativeName>
</protein>
<geneLocation type="chloroplast"/>
<reference key="1">
    <citation type="journal article" date="2000" name="DNA Res.">
        <title>Complete structure of the chloroplast genome of a legume, Lotus japonicus.</title>
        <authorList>
            <person name="Kato T."/>
            <person name="Kaneko T."/>
            <person name="Sato S."/>
            <person name="Nakamura Y."/>
            <person name="Tabata S."/>
        </authorList>
    </citation>
    <scope>NUCLEOTIDE SEQUENCE [LARGE SCALE GENOMIC DNA]</scope>
    <source>
        <strain>cv. Miyakojima MG-20</strain>
    </source>
</reference>
<dbReference type="EMBL" id="AP002983">
    <property type="protein sequence ID" value="BAB33252.1"/>
    <property type="molecule type" value="Genomic_DNA"/>
</dbReference>
<dbReference type="RefSeq" id="NP_084852.1">
    <property type="nucleotide sequence ID" value="NC_002694.1"/>
</dbReference>
<dbReference type="SMR" id="Q9BBN7"/>
<dbReference type="GeneID" id="802888"/>
<dbReference type="GO" id="GO:0009507">
    <property type="term" value="C:chloroplast"/>
    <property type="evidence" value="ECO:0007669"/>
    <property type="project" value="UniProtKB-SubCell"/>
</dbReference>
<dbReference type="GO" id="GO:1990904">
    <property type="term" value="C:ribonucleoprotein complex"/>
    <property type="evidence" value="ECO:0007669"/>
    <property type="project" value="UniProtKB-KW"/>
</dbReference>
<dbReference type="GO" id="GO:0005840">
    <property type="term" value="C:ribosome"/>
    <property type="evidence" value="ECO:0007669"/>
    <property type="project" value="UniProtKB-KW"/>
</dbReference>
<dbReference type="GO" id="GO:0003735">
    <property type="term" value="F:structural constituent of ribosome"/>
    <property type="evidence" value="ECO:0007669"/>
    <property type="project" value="InterPro"/>
</dbReference>
<dbReference type="GO" id="GO:0006412">
    <property type="term" value="P:translation"/>
    <property type="evidence" value="ECO:0007669"/>
    <property type="project" value="UniProtKB-UniRule"/>
</dbReference>
<dbReference type="CDD" id="cd00677">
    <property type="entry name" value="S15_NS1_EPRS_RNA-bind"/>
    <property type="match status" value="1"/>
</dbReference>
<dbReference type="Gene3D" id="1.10.287.10">
    <property type="entry name" value="S15/NS1, RNA-binding"/>
    <property type="match status" value="1"/>
</dbReference>
<dbReference type="HAMAP" id="MF_01343_B">
    <property type="entry name" value="Ribosomal_uS15_B"/>
    <property type="match status" value="1"/>
</dbReference>
<dbReference type="InterPro" id="IPR000589">
    <property type="entry name" value="Ribosomal_uS15"/>
</dbReference>
<dbReference type="InterPro" id="IPR005290">
    <property type="entry name" value="Ribosomal_uS15_bac-type"/>
</dbReference>
<dbReference type="InterPro" id="IPR009068">
    <property type="entry name" value="uS15_NS1_RNA-bd_sf"/>
</dbReference>
<dbReference type="NCBIfam" id="TIGR00952">
    <property type="entry name" value="S15_bact"/>
    <property type="match status" value="1"/>
</dbReference>
<dbReference type="PANTHER" id="PTHR23321">
    <property type="entry name" value="RIBOSOMAL PROTEIN S15, BACTERIAL AND ORGANELLAR"/>
    <property type="match status" value="1"/>
</dbReference>
<dbReference type="PANTHER" id="PTHR23321:SF26">
    <property type="entry name" value="SMALL RIBOSOMAL SUBUNIT PROTEIN US15M"/>
    <property type="match status" value="1"/>
</dbReference>
<dbReference type="Pfam" id="PF00312">
    <property type="entry name" value="Ribosomal_S15"/>
    <property type="match status" value="1"/>
</dbReference>
<dbReference type="SMART" id="SM01387">
    <property type="entry name" value="Ribosomal_S15"/>
    <property type="match status" value="1"/>
</dbReference>
<dbReference type="SUPFAM" id="SSF47060">
    <property type="entry name" value="S15/NS1 RNA-binding domain"/>
    <property type="match status" value="1"/>
</dbReference>
<dbReference type="PROSITE" id="PS00362">
    <property type="entry name" value="RIBOSOMAL_S15"/>
    <property type="match status" value="1"/>
</dbReference>